<protein>
    <recommendedName>
        <fullName evidence="1">Small ribosomal subunit protein uS13</fullName>
    </recommendedName>
    <alternativeName>
        <fullName evidence="3">30S ribosomal protein S13</fullName>
    </alternativeName>
</protein>
<gene>
    <name evidence="1" type="primary">rpsM</name>
    <name type="ordered locus">BA_0135</name>
    <name type="ordered locus">GBAA_0135</name>
    <name type="ordered locus">BAS0135</name>
</gene>
<name>RS13_BACAN</name>
<proteinExistence type="inferred from homology"/>
<comment type="function">
    <text evidence="1">Located at the top of the head of the 30S subunit, it contacts several helices of the 16S rRNA. In the 70S ribosome it contacts the 23S rRNA (bridge B1a) and protein L5 of the 50S subunit (bridge B1b), connecting the 2 subunits; these bridges are implicated in subunit movement. Contacts the tRNAs in the A and P-sites.</text>
</comment>
<comment type="subunit">
    <text evidence="1">Part of the 30S ribosomal subunit. Forms a loose heterodimer with protein S19. Forms two bridges to the 50S subunit in the 70S ribosome.</text>
</comment>
<comment type="similarity">
    <text evidence="1">Belongs to the universal ribosomal protein uS13 family.</text>
</comment>
<evidence type="ECO:0000255" key="1">
    <source>
        <dbReference type="HAMAP-Rule" id="MF_01315"/>
    </source>
</evidence>
<evidence type="ECO:0000256" key="2">
    <source>
        <dbReference type="SAM" id="MobiDB-lite"/>
    </source>
</evidence>
<evidence type="ECO:0000305" key="3"/>
<dbReference type="EMBL" id="AE016879">
    <property type="protein sequence ID" value="AAP24189.1"/>
    <property type="molecule type" value="Genomic_DNA"/>
</dbReference>
<dbReference type="EMBL" id="AE017334">
    <property type="protein sequence ID" value="AAT29215.1"/>
    <property type="molecule type" value="Genomic_DNA"/>
</dbReference>
<dbReference type="EMBL" id="AE017225">
    <property type="protein sequence ID" value="AAT52472.1"/>
    <property type="molecule type" value="Genomic_DNA"/>
</dbReference>
<dbReference type="RefSeq" id="NP_842703.1">
    <property type="nucleotide sequence ID" value="NC_003997.3"/>
</dbReference>
<dbReference type="RefSeq" id="WP_000090788.1">
    <property type="nucleotide sequence ID" value="NZ_WXXJ01000051.1"/>
</dbReference>
<dbReference type="RefSeq" id="YP_026421.1">
    <property type="nucleotide sequence ID" value="NC_005945.1"/>
</dbReference>
<dbReference type="SMR" id="P62176"/>
<dbReference type="STRING" id="261594.GBAA_0135"/>
<dbReference type="DNASU" id="1085954"/>
<dbReference type="GeneID" id="93010918"/>
<dbReference type="KEGG" id="ban:BA_0135"/>
<dbReference type="KEGG" id="bar:GBAA_0135"/>
<dbReference type="KEGG" id="bat:BAS0135"/>
<dbReference type="PATRIC" id="fig|198094.11.peg.132"/>
<dbReference type="eggNOG" id="COG0099">
    <property type="taxonomic scope" value="Bacteria"/>
</dbReference>
<dbReference type="HOGENOM" id="CLU_103849_1_1_9"/>
<dbReference type="OMA" id="MNVKRLM"/>
<dbReference type="OrthoDB" id="9803610at2"/>
<dbReference type="Proteomes" id="UP000000427">
    <property type="component" value="Chromosome"/>
</dbReference>
<dbReference type="Proteomes" id="UP000000594">
    <property type="component" value="Chromosome"/>
</dbReference>
<dbReference type="GO" id="GO:0005829">
    <property type="term" value="C:cytosol"/>
    <property type="evidence" value="ECO:0007669"/>
    <property type="project" value="TreeGrafter"/>
</dbReference>
<dbReference type="GO" id="GO:0015935">
    <property type="term" value="C:small ribosomal subunit"/>
    <property type="evidence" value="ECO:0007669"/>
    <property type="project" value="TreeGrafter"/>
</dbReference>
<dbReference type="GO" id="GO:0019843">
    <property type="term" value="F:rRNA binding"/>
    <property type="evidence" value="ECO:0007669"/>
    <property type="project" value="UniProtKB-UniRule"/>
</dbReference>
<dbReference type="GO" id="GO:0003735">
    <property type="term" value="F:structural constituent of ribosome"/>
    <property type="evidence" value="ECO:0007669"/>
    <property type="project" value="InterPro"/>
</dbReference>
<dbReference type="GO" id="GO:0000049">
    <property type="term" value="F:tRNA binding"/>
    <property type="evidence" value="ECO:0007669"/>
    <property type="project" value="UniProtKB-UniRule"/>
</dbReference>
<dbReference type="GO" id="GO:0006412">
    <property type="term" value="P:translation"/>
    <property type="evidence" value="ECO:0007669"/>
    <property type="project" value="UniProtKB-UniRule"/>
</dbReference>
<dbReference type="FunFam" id="1.10.8.50:FF:000001">
    <property type="entry name" value="30S ribosomal protein S13"/>
    <property type="match status" value="1"/>
</dbReference>
<dbReference type="FunFam" id="4.10.910.10:FF:000001">
    <property type="entry name" value="30S ribosomal protein S13"/>
    <property type="match status" value="1"/>
</dbReference>
<dbReference type="Gene3D" id="1.10.8.50">
    <property type="match status" value="1"/>
</dbReference>
<dbReference type="Gene3D" id="4.10.910.10">
    <property type="entry name" value="30s ribosomal protein s13, domain 2"/>
    <property type="match status" value="1"/>
</dbReference>
<dbReference type="HAMAP" id="MF_01315">
    <property type="entry name" value="Ribosomal_uS13"/>
    <property type="match status" value="1"/>
</dbReference>
<dbReference type="InterPro" id="IPR027437">
    <property type="entry name" value="Rbsml_uS13_C"/>
</dbReference>
<dbReference type="InterPro" id="IPR001892">
    <property type="entry name" value="Ribosomal_uS13"/>
</dbReference>
<dbReference type="InterPro" id="IPR010979">
    <property type="entry name" value="Ribosomal_uS13-like_H2TH"/>
</dbReference>
<dbReference type="InterPro" id="IPR019980">
    <property type="entry name" value="Ribosomal_uS13_bac-type"/>
</dbReference>
<dbReference type="InterPro" id="IPR018269">
    <property type="entry name" value="Ribosomal_uS13_CS"/>
</dbReference>
<dbReference type="NCBIfam" id="TIGR03631">
    <property type="entry name" value="uS13_bact"/>
    <property type="match status" value="1"/>
</dbReference>
<dbReference type="PANTHER" id="PTHR10871">
    <property type="entry name" value="30S RIBOSOMAL PROTEIN S13/40S RIBOSOMAL PROTEIN S18"/>
    <property type="match status" value="1"/>
</dbReference>
<dbReference type="PANTHER" id="PTHR10871:SF1">
    <property type="entry name" value="SMALL RIBOSOMAL SUBUNIT PROTEIN US13M"/>
    <property type="match status" value="1"/>
</dbReference>
<dbReference type="Pfam" id="PF00416">
    <property type="entry name" value="Ribosomal_S13"/>
    <property type="match status" value="1"/>
</dbReference>
<dbReference type="PIRSF" id="PIRSF002134">
    <property type="entry name" value="Ribosomal_S13"/>
    <property type="match status" value="1"/>
</dbReference>
<dbReference type="SUPFAM" id="SSF46946">
    <property type="entry name" value="S13-like H2TH domain"/>
    <property type="match status" value="1"/>
</dbReference>
<dbReference type="PROSITE" id="PS00646">
    <property type="entry name" value="RIBOSOMAL_S13_1"/>
    <property type="match status" value="1"/>
</dbReference>
<dbReference type="PROSITE" id="PS50159">
    <property type="entry name" value="RIBOSOMAL_S13_2"/>
    <property type="match status" value="1"/>
</dbReference>
<organism>
    <name type="scientific">Bacillus anthracis</name>
    <dbReference type="NCBI Taxonomy" id="1392"/>
    <lineage>
        <taxon>Bacteria</taxon>
        <taxon>Bacillati</taxon>
        <taxon>Bacillota</taxon>
        <taxon>Bacilli</taxon>
        <taxon>Bacillales</taxon>
        <taxon>Bacillaceae</taxon>
        <taxon>Bacillus</taxon>
        <taxon>Bacillus cereus group</taxon>
    </lineage>
</organism>
<feature type="chain" id="PRO_0000132061" description="Small ribosomal subunit protein uS13">
    <location>
        <begin position="1"/>
        <end position="121"/>
    </location>
</feature>
<feature type="region of interest" description="Disordered" evidence="2">
    <location>
        <begin position="91"/>
        <end position="121"/>
    </location>
</feature>
<feature type="compositionally biased region" description="Basic residues" evidence="2">
    <location>
        <begin position="106"/>
        <end position="121"/>
    </location>
</feature>
<sequence length="121" mass="13819">MARIAGVDIPRDKRVVISLTYVFGIGRTTAEKILAEAGISEETRVRDLTEDELGRIRDIIDRIKVEGDLRREVSLNIKRLMEIGSYRGLRHRRGLPVRGQNSKNNARTRKGPRRTVANKKK</sequence>
<keyword id="KW-1185">Reference proteome</keyword>
<keyword id="KW-0687">Ribonucleoprotein</keyword>
<keyword id="KW-0689">Ribosomal protein</keyword>
<keyword id="KW-0694">RNA-binding</keyword>
<keyword id="KW-0699">rRNA-binding</keyword>
<keyword id="KW-0820">tRNA-binding</keyword>
<reference key="1">
    <citation type="journal article" date="2003" name="Nature">
        <title>The genome sequence of Bacillus anthracis Ames and comparison to closely related bacteria.</title>
        <authorList>
            <person name="Read T.D."/>
            <person name="Peterson S.N."/>
            <person name="Tourasse N.J."/>
            <person name="Baillie L.W."/>
            <person name="Paulsen I.T."/>
            <person name="Nelson K.E."/>
            <person name="Tettelin H."/>
            <person name="Fouts D.E."/>
            <person name="Eisen J.A."/>
            <person name="Gill S.R."/>
            <person name="Holtzapple E.K."/>
            <person name="Okstad O.A."/>
            <person name="Helgason E."/>
            <person name="Rilstone J."/>
            <person name="Wu M."/>
            <person name="Kolonay J.F."/>
            <person name="Beanan M.J."/>
            <person name="Dodson R.J."/>
            <person name="Brinkac L.M."/>
            <person name="Gwinn M.L."/>
            <person name="DeBoy R.T."/>
            <person name="Madpu R."/>
            <person name="Daugherty S.C."/>
            <person name="Durkin A.S."/>
            <person name="Haft D.H."/>
            <person name="Nelson W.C."/>
            <person name="Peterson J.D."/>
            <person name="Pop M."/>
            <person name="Khouri H.M."/>
            <person name="Radune D."/>
            <person name="Benton J.L."/>
            <person name="Mahamoud Y."/>
            <person name="Jiang L."/>
            <person name="Hance I.R."/>
            <person name="Weidman J.F."/>
            <person name="Berry K.J."/>
            <person name="Plaut R.D."/>
            <person name="Wolf A.M."/>
            <person name="Watkins K.L."/>
            <person name="Nierman W.C."/>
            <person name="Hazen A."/>
            <person name="Cline R.T."/>
            <person name="Redmond C."/>
            <person name="Thwaite J.E."/>
            <person name="White O."/>
            <person name="Salzberg S.L."/>
            <person name="Thomason B."/>
            <person name="Friedlander A.M."/>
            <person name="Koehler T.M."/>
            <person name="Hanna P.C."/>
            <person name="Kolstoe A.-B."/>
            <person name="Fraser C.M."/>
        </authorList>
    </citation>
    <scope>NUCLEOTIDE SEQUENCE [LARGE SCALE GENOMIC DNA]</scope>
    <source>
        <strain>Ames / isolate Porton</strain>
    </source>
</reference>
<reference key="2">
    <citation type="journal article" date="2009" name="J. Bacteriol.">
        <title>The complete genome sequence of Bacillus anthracis Ames 'Ancestor'.</title>
        <authorList>
            <person name="Ravel J."/>
            <person name="Jiang L."/>
            <person name="Stanley S.T."/>
            <person name="Wilson M.R."/>
            <person name="Decker R.S."/>
            <person name="Read T.D."/>
            <person name="Worsham P."/>
            <person name="Keim P.S."/>
            <person name="Salzberg S.L."/>
            <person name="Fraser-Liggett C.M."/>
            <person name="Rasko D.A."/>
        </authorList>
    </citation>
    <scope>NUCLEOTIDE SEQUENCE [LARGE SCALE GENOMIC DNA]</scope>
    <source>
        <strain>Ames ancestor</strain>
    </source>
</reference>
<reference key="3">
    <citation type="submission" date="2004-01" db="EMBL/GenBank/DDBJ databases">
        <title>Complete genome sequence of Bacillus anthracis Sterne.</title>
        <authorList>
            <person name="Brettin T.S."/>
            <person name="Bruce D."/>
            <person name="Challacombe J.F."/>
            <person name="Gilna P."/>
            <person name="Han C."/>
            <person name="Hill K."/>
            <person name="Hitchcock P."/>
            <person name="Jackson P."/>
            <person name="Keim P."/>
            <person name="Longmire J."/>
            <person name="Lucas S."/>
            <person name="Okinaka R."/>
            <person name="Richardson P."/>
            <person name="Rubin E."/>
            <person name="Tice H."/>
        </authorList>
    </citation>
    <scope>NUCLEOTIDE SEQUENCE [LARGE SCALE GENOMIC DNA]</scope>
    <source>
        <strain>Sterne</strain>
    </source>
</reference>
<accession>P62176</accession>
<accession>P59751</accession>
<accession>Q6I4Q9</accession>
<accession>Q6KYF5</accession>